<name>TRMB_STRZT</name>
<accession>C1CQ43</accession>
<organism>
    <name type="scientific">Streptococcus pneumoniae (strain Taiwan19F-14)</name>
    <dbReference type="NCBI Taxonomy" id="487213"/>
    <lineage>
        <taxon>Bacteria</taxon>
        <taxon>Bacillati</taxon>
        <taxon>Bacillota</taxon>
        <taxon>Bacilli</taxon>
        <taxon>Lactobacillales</taxon>
        <taxon>Streptococcaceae</taxon>
        <taxon>Streptococcus</taxon>
    </lineage>
</organism>
<proteinExistence type="inferred from homology"/>
<feature type="chain" id="PRO_1000149670" description="tRNA (guanine-N(7)-)-methyltransferase">
    <location>
        <begin position="1"/>
        <end position="211"/>
    </location>
</feature>
<feature type="region of interest" description="Interaction with RNA" evidence="2">
    <location>
        <begin position="124"/>
        <end position="129"/>
    </location>
</feature>
<feature type="active site" evidence="1">
    <location>
        <position position="118"/>
    </location>
</feature>
<feature type="binding site" evidence="2">
    <location>
        <position position="44"/>
    </location>
    <ligand>
        <name>S-adenosyl-L-methionine</name>
        <dbReference type="ChEBI" id="CHEBI:59789"/>
    </ligand>
</feature>
<feature type="binding site" evidence="2">
    <location>
        <position position="69"/>
    </location>
    <ligand>
        <name>S-adenosyl-L-methionine</name>
        <dbReference type="ChEBI" id="CHEBI:59789"/>
    </ligand>
</feature>
<feature type="binding site" evidence="2">
    <location>
        <position position="96"/>
    </location>
    <ligand>
        <name>S-adenosyl-L-methionine</name>
        <dbReference type="ChEBI" id="CHEBI:59789"/>
    </ligand>
</feature>
<feature type="binding site" evidence="2">
    <location>
        <position position="118"/>
    </location>
    <ligand>
        <name>S-adenosyl-L-methionine</name>
        <dbReference type="ChEBI" id="CHEBI:59789"/>
    </ligand>
</feature>
<feature type="binding site" evidence="2">
    <location>
        <position position="122"/>
    </location>
    <ligand>
        <name>substrate</name>
    </ligand>
</feature>
<feature type="binding site" evidence="2">
    <location>
        <position position="154"/>
    </location>
    <ligand>
        <name>substrate</name>
    </ligand>
</feature>
<feature type="binding site" evidence="2">
    <location>
        <begin position="191"/>
        <end position="194"/>
    </location>
    <ligand>
        <name>substrate</name>
    </ligand>
</feature>
<evidence type="ECO:0000250" key="1"/>
<evidence type="ECO:0000255" key="2">
    <source>
        <dbReference type="HAMAP-Rule" id="MF_01057"/>
    </source>
</evidence>
<comment type="function">
    <text evidence="2">Catalyzes the formation of N(7)-methylguanine at position 46 (m7G46) in tRNA.</text>
</comment>
<comment type="catalytic activity">
    <reaction evidence="2">
        <text>guanosine(46) in tRNA + S-adenosyl-L-methionine = N(7)-methylguanosine(46) in tRNA + S-adenosyl-L-homocysteine</text>
        <dbReference type="Rhea" id="RHEA:42708"/>
        <dbReference type="Rhea" id="RHEA-COMP:10188"/>
        <dbReference type="Rhea" id="RHEA-COMP:10189"/>
        <dbReference type="ChEBI" id="CHEBI:57856"/>
        <dbReference type="ChEBI" id="CHEBI:59789"/>
        <dbReference type="ChEBI" id="CHEBI:74269"/>
        <dbReference type="ChEBI" id="CHEBI:74480"/>
        <dbReference type="EC" id="2.1.1.33"/>
    </reaction>
</comment>
<comment type="pathway">
    <text evidence="2">tRNA modification; N(7)-methylguanine-tRNA biosynthesis.</text>
</comment>
<comment type="similarity">
    <text evidence="2">Belongs to the class I-like SAM-binding methyltransferase superfamily. TrmB family.</text>
</comment>
<sequence>MRVRNRKGATELLEANPQYVVLNPLEAKAKWRDLFGNDNPIHVEVGSGKGAFVSGMAKQNPDINYIGIDIQKSVLSYALDKVLEAGVSNIKLLWVDGSDLTDYFEDGEIDRLYLNFSDPWPKKRHEKRRLTYKTFLDTFKRILPENGEIHFKTDNRGLFEYSLVSFSQYGMKLNGVWLDLHASDFEGNVMTEYEQKFSNKGQVIYRVEAEF</sequence>
<protein>
    <recommendedName>
        <fullName evidence="2">tRNA (guanine-N(7)-)-methyltransferase</fullName>
        <ecNumber evidence="2">2.1.1.33</ecNumber>
    </recommendedName>
    <alternativeName>
        <fullName evidence="2">tRNA (guanine(46)-N(7))-methyltransferase</fullName>
    </alternativeName>
    <alternativeName>
        <fullName evidence="2">tRNA(m7G46)-methyltransferase</fullName>
    </alternativeName>
</protein>
<reference key="1">
    <citation type="journal article" date="2010" name="Genome Biol.">
        <title>Structure and dynamics of the pan-genome of Streptococcus pneumoniae and closely related species.</title>
        <authorList>
            <person name="Donati C."/>
            <person name="Hiller N.L."/>
            <person name="Tettelin H."/>
            <person name="Muzzi A."/>
            <person name="Croucher N.J."/>
            <person name="Angiuoli S.V."/>
            <person name="Oggioni M."/>
            <person name="Dunning Hotopp J.C."/>
            <person name="Hu F.Z."/>
            <person name="Riley D.R."/>
            <person name="Covacci A."/>
            <person name="Mitchell T.J."/>
            <person name="Bentley S.D."/>
            <person name="Kilian M."/>
            <person name="Ehrlich G.D."/>
            <person name="Rappuoli R."/>
            <person name="Moxon E.R."/>
            <person name="Masignani V."/>
        </authorList>
    </citation>
    <scope>NUCLEOTIDE SEQUENCE [LARGE SCALE GENOMIC DNA]</scope>
    <source>
        <strain>Taiwan19F-14</strain>
    </source>
</reference>
<gene>
    <name evidence="2" type="primary">trmB</name>
    <name type="ordered locus">SPT_0581</name>
</gene>
<dbReference type="EC" id="2.1.1.33" evidence="2"/>
<dbReference type="EMBL" id="CP000921">
    <property type="protein sequence ID" value="ACO22727.1"/>
    <property type="molecule type" value="Genomic_DNA"/>
</dbReference>
<dbReference type="RefSeq" id="WP_001266078.1">
    <property type="nucleotide sequence ID" value="NC_012469.1"/>
</dbReference>
<dbReference type="SMR" id="C1CQ43"/>
<dbReference type="KEGG" id="snt:SPT_0581"/>
<dbReference type="HOGENOM" id="CLU_050910_2_1_9"/>
<dbReference type="UniPathway" id="UPA00989"/>
<dbReference type="GO" id="GO:0043527">
    <property type="term" value="C:tRNA methyltransferase complex"/>
    <property type="evidence" value="ECO:0007669"/>
    <property type="project" value="TreeGrafter"/>
</dbReference>
<dbReference type="GO" id="GO:0008176">
    <property type="term" value="F:tRNA (guanine(46)-N7)-methyltransferase activity"/>
    <property type="evidence" value="ECO:0007669"/>
    <property type="project" value="UniProtKB-UniRule"/>
</dbReference>
<dbReference type="CDD" id="cd02440">
    <property type="entry name" value="AdoMet_MTases"/>
    <property type="match status" value="1"/>
</dbReference>
<dbReference type="FunFam" id="3.40.50.150:FF:000035">
    <property type="entry name" value="tRNA (guanine-N(7)-)-methyltransferase"/>
    <property type="match status" value="1"/>
</dbReference>
<dbReference type="Gene3D" id="3.40.50.150">
    <property type="entry name" value="Vaccinia Virus protein VP39"/>
    <property type="match status" value="1"/>
</dbReference>
<dbReference type="HAMAP" id="MF_01057">
    <property type="entry name" value="tRNA_methyltr_TrmB"/>
    <property type="match status" value="1"/>
</dbReference>
<dbReference type="InterPro" id="IPR029063">
    <property type="entry name" value="SAM-dependent_MTases_sf"/>
</dbReference>
<dbReference type="InterPro" id="IPR003358">
    <property type="entry name" value="tRNA_(Gua-N-7)_MeTrfase_Trmb"/>
</dbReference>
<dbReference type="InterPro" id="IPR055361">
    <property type="entry name" value="tRNA_methyltr_TrmB_bact"/>
</dbReference>
<dbReference type="NCBIfam" id="NF001080">
    <property type="entry name" value="PRK00121.2-2"/>
    <property type="match status" value="1"/>
</dbReference>
<dbReference type="NCBIfam" id="TIGR00091">
    <property type="entry name" value="tRNA (guanosine(46)-N7)-methyltransferase TrmB"/>
    <property type="match status" value="1"/>
</dbReference>
<dbReference type="PANTHER" id="PTHR23417">
    <property type="entry name" value="3-DEOXY-D-MANNO-OCTULOSONIC-ACID TRANSFERASE/TRNA GUANINE-N 7 - -METHYLTRANSFERASE"/>
    <property type="match status" value="1"/>
</dbReference>
<dbReference type="PANTHER" id="PTHR23417:SF14">
    <property type="entry name" value="PENTACOTRIPEPTIDE-REPEAT REGION OF PRORP DOMAIN-CONTAINING PROTEIN"/>
    <property type="match status" value="1"/>
</dbReference>
<dbReference type="Pfam" id="PF02390">
    <property type="entry name" value="Methyltransf_4"/>
    <property type="match status" value="1"/>
</dbReference>
<dbReference type="SUPFAM" id="SSF53335">
    <property type="entry name" value="S-adenosyl-L-methionine-dependent methyltransferases"/>
    <property type="match status" value="1"/>
</dbReference>
<dbReference type="PROSITE" id="PS51625">
    <property type="entry name" value="SAM_MT_TRMB"/>
    <property type="match status" value="1"/>
</dbReference>
<keyword id="KW-0489">Methyltransferase</keyword>
<keyword id="KW-0949">S-adenosyl-L-methionine</keyword>
<keyword id="KW-0808">Transferase</keyword>
<keyword id="KW-0819">tRNA processing</keyword>